<sequence length="60" mass="6879">MDTKLLELLVCPVTKGHLEYDREKHELISRSARLAYPVRDGIPVMLENEARTLTDEELGL</sequence>
<protein>
    <recommendedName>
        <fullName evidence="1">UPF0434 protein Pnap_1922</fullName>
    </recommendedName>
</protein>
<accession>A1VNK4</accession>
<comment type="similarity">
    <text evidence="1">Belongs to the UPF0434 family.</text>
</comment>
<name>Y1922_POLNA</name>
<proteinExistence type="inferred from homology"/>
<reference key="1">
    <citation type="journal article" date="2009" name="Environ. Microbiol.">
        <title>The genome of Polaromonas naphthalenivorans strain CJ2, isolated from coal tar-contaminated sediment, reveals physiological and metabolic versatility and evolution through extensive horizontal gene transfer.</title>
        <authorList>
            <person name="Yagi J.M."/>
            <person name="Sims D."/>
            <person name="Brettin T."/>
            <person name="Bruce D."/>
            <person name="Madsen E.L."/>
        </authorList>
    </citation>
    <scope>NUCLEOTIDE SEQUENCE [LARGE SCALE GENOMIC DNA]</scope>
    <source>
        <strain>CJ2</strain>
    </source>
</reference>
<feature type="chain" id="PRO_0000291127" description="UPF0434 protein Pnap_1922">
    <location>
        <begin position="1"/>
        <end position="60"/>
    </location>
</feature>
<gene>
    <name type="ordered locus">Pnap_1922</name>
</gene>
<dbReference type="EMBL" id="CP000529">
    <property type="protein sequence ID" value="ABM37232.1"/>
    <property type="molecule type" value="Genomic_DNA"/>
</dbReference>
<dbReference type="RefSeq" id="WP_011801313.1">
    <property type="nucleotide sequence ID" value="NC_008781.1"/>
</dbReference>
<dbReference type="SMR" id="A1VNK4"/>
<dbReference type="STRING" id="365044.Pnap_1922"/>
<dbReference type="KEGG" id="pna:Pnap_1922"/>
<dbReference type="eggNOG" id="COG2835">
    <property type="taxonomic scope" value="Bacteria"/>
</dbReference>
<dbReference type="HOGENOM" id="CLU_155659_3_1_4"/>
<dbReference type="OrthoDB" id="9812205at2"/>
<dbReference type="Proteomes" id="UP000000644">
    <property type="component" value="Chromosome"/>
</dbReference>
<dbReference type="GO" id="GO:0005829">
    <property type="term" value="C:cytosol"/>
    <property type="evidence" value="ECO:0007669"/>
    <property type="project" value="TreeGrafter"/>
</dbReference>
<dbReference type="FunFam" id="2.20.25.10:FF:000002">
    <property type="entry name" value="UPF0434 protein YcaR"/>
    <property type="match status" value="1"/>
</dbReference>
<dbReference type="Gene3D" id="2.20.25.10">
    <property type="match status" value="1"/>
</dbReference>
<dbReference type="HAMAP" id="MF_01187">
    <property type="entry name" value="UPF0434"/>
    <property type="match status" value="1"/>
</dbReference>
<dbReference type="InterPro" id="IPR005651">
    <property type="entry name" value="Trm112-like"/>
</dbReference>
<dbReference type="PANTHER" id="PTHR33505:SF4">
    <property type="entry name" value="PROTEIN PREY, MITOCHONDRIAL"/>
    <property type="match status" value="1"/>
</dbReference>
<dbReference type="PANTHER" id="PTHR33505">
    <property type="entry name" value="ZGC:162634"/>
    <property type="match status" value="1"/>
</dbReference>
<dbReference type="Pfam" id="PF03966">
    <property type="entry name" value="Trm112p"/>
    <property type="match status" value="1"/>
</dbReference>
<dbReference type="SUPFAM" id="SSF158997">
    <property type="entry name" value="Trm112p-like"/>
    <property type="match status" value="1"/>
</dbReference>
<organism>
    <name type="scientific">Polaromonas naphthalenivorans (strain CJ2)</name>
    <dbReference type="NCBI Taxonomy" id="365044"/>
    <lineage>
        <taxon>Bacteria</taxon>
        <taxon>Pseudomonadati</taxon>
        <taxon>Pseudomonadota</taxon>
        <taxon>Betaproteobacteria</taxon>
        <taxon>Burkholderiales</taxon>
        <taxon>Comamonadaceae</taxon>
        <taxon>Polaromonas</taxon>
    </lineage>
</organism>
<keyword id="KW-1185">Reference proteome</keyword>
<evidence type="ECO:0000255" key="1">
    <source>
        <dbReference type="HAMAP-Rule" id="MF_01187"/>
    </source>
</evidence>